<keyword id="KW-0687">Ribonucleoprotein</keyword>
<keyword id="KW-0689">Ribosomal protein</keyword>
<proteinExistence type="inferred from homology"/>
<name>RS2_BURVG</name>
<organism>
    <name type="scientific">Burkholderia vietnamiensis (strain G4 / LMG 22486)</name>
    <name type="common">Burkholderia cepacia (strain R1808)</name>
    <dbReference type="NCBI Taxonomy" id="269482"/>
    <lineage>
        <taxon>Bacteria</taxon>
        <taxon>Pseudomonadati</taxon>
        <taxon>Pseudomonadota</taxon>
        <taxon>Betaproteobacteria</taxon>
        <taxon>Burkholderiales</taxon>
        <taxon>Burkholderiaceae</taxon>
        <taxon>Burkholderia</taxon>
        <taxon>Burkholderia cepacia complex</taxon>
    </lineage>
</organism>
<accession>A4JF75</accession>
<protein>
    <recommendedName>
        <fullName evidence="1">Small ribosomal subunit protein uS2</fullName>
    </recommendedName>
    <alternativeName>
        <fullName evidence="2">30S ribosomal protein S2</fullName>
    </alternativeName>
</protein>
<gene>
    <name evidence="1" type="primary">rpsB</name>
    <name type="ordered locus">Bcep1808_1925</name>
</gene>
<sequence length="246" mass="27144">MAVTMRQMLEAGVHFGHQTRFWNPKMAPFIFGHRNKIHIINLEKTLPMFTDAQKYVRQLAANRGTILFVGTKRQSRDTIAQEAQRAGMPYVNARWLGGMMTNFKTLKVSIKRLKDMEAAVEAGETEKMSKKEALLFEREIAKLQKSIGGVKDMGGIPDAIFVIDVGYHKIAVTEANKLGVPVIAVVDTNHSPEGVDYVIPGNDDSSKAVALYAQGVADAILEGRANAVNEVVQAVRGDDEYVEENA</sequence>
<reference key="1">
    <citation type="submission" date="2007-03" db="EMBL/GenBank/DDBJ databases">
        <title>Complete sequence of chromosome 1 of Burkholderia vietnamiensis G4.</title>
        <authorList>
            <consortium name="US DOE Joint Genome Institute"/>
            <person name="Copeland A."/>
            <person name="Lucas S."/>
            <person name="Lapidus A."/>
            <person name="Barry K."/>
            <person name="Detter J.C."/>
            <person name="Glavina del Rio T."/>
            <person name="Hammon N."/>
            <person name="Israni S."/>
            <person name="Dalin E."/>
            <person name="Tice H."/>
            <person name="Pitluck S."/>
            <person name="Chain P."/>
            <person name="Malfatti S."/>
            <person name="Shin M."/>
            <person name="Vergez L."/>
            <person name="Schmutz J."/>
            <person name="Larimer F."/>
            <person name="Land M."/>
            <person name="Hauser L."/>
            <person name="Kyrpides N."/>
            <person name="Tiedje J."/>
            <person name="Richardson P."/>
        </authorList>
    </citation>
    <scope>NUCLEOTIDE SEQUENCE [LARGE SCALE GENOMIC DNA]</scope>
    <source>
        <strain>G4 / LMG 22486</strain>
    </source>
</reference>
<feature type="chain" id="PRO_1000003916" description="Small ribosomal subunit protein uS2">
    <location>
        <begin position="1"/>
        <end position="246"/>
    </location>
</feature>
<dbReference type="EMBL" id="CP000614">
    <property type="protein sequence ID" value="ABO54928.1"/>
    <property type="molecule type" value="Genomic_DNA"/>
</dbReference>
<dbReference type="SMR" id="A4JF75"/>
<dbReference type="KEGG" id="bvi:Bcep1808_1925"/>
<dbReference type="eggNOG" id="COG0052">
    <property type="taxonomic scope" value="Bacteria"/>
</dbReference>
<dbReference type="HOGENOM" id="CLU_040318_1_2_4"/>
<dbReference type="Proteomes" id="UP000002287">
    <property type="component" value="Chromosome 1"/>
</dbReference>
<dbReference type="GO" id="GO:0022627">
    <property type="term" value="C:cytosolic small ribosomal subunit"/>
    <property type="evidence" value="ECO:0007669"/>
    <property type="project" value="TreeGrafter"/>
</dbReference>
<dbReference type="GO" id="GO:0003735">
    <property type="term" value="F:structural constituent of ribosome"/>
    <property type="evidence" value="ECO:0007669"/>
    <property type="project" value="InterPro"/>
</dbReference>
<dbReference type="GO" id="GO:0006412">
    <property type="term" value="P:translation"/>
    <property type="evidence" value="ECO:0007669"/>
    <property type="project" value="UniProtKB-UniRule"/>
</dbReference>
<dbReference type="CDD" id="cd01425">
    <property type="entry name" value="RPS2"/>
    <property type="match status" value="1"/>
</dbReference>
<dbReference type="FunFam" id="1.10.287.610:FF:000001">
    <property type="entry name" value="30S ribosomal protein S2"/>
    <property type="match status" value="1"/>
</dbReference>
<dbReference type="Gene3D" id="3.40.50.10490">
    <property type="entry name" value="Glucose-6-phosphate isomerase like protein, domain 1"/>
    <property type="match status" value="1"/>
</dbReference>
<dbReference type="Gene3D" id="1.10.287.610">
    <property type="entry name" value="Helix hairpin bin"/>
    <property type="match status" value="1"/>
</dbReference>
<dbReference type="HAMAP" id="MF_00291_B">
    <property type="entry name" value="Ribosomal_uS2_B"/>
    <property type="match status" value="1"/>
</dbReference>
<dbReference type="InterPro" id="IPR001865">
    <property type="entry name" value="Ribosomal_uS2"/>
</dbReference>
<dbReference type="InterPro" id="IPR005706">
    <property type="entry name" value="Ribosomal_uS2_bac/mit/plastid"/>
</dbReference>
<dbReference type="InterPro" id="IPR018130">
    <property type="entry name" value="Ribosomal_uS2_CS"/>
</dbReference>
<dbReference type="InterPro" id="IPR023591">
    <property type="entry name" value="Ribosomal_uS2_flav_dom_sf"/>
</dbReference>
<dbReference type="NCBIfam" id="TIGR01011">
    <property type="entry name" value="rpsB_bact"/>
    <property type="match status" value="1"/>
</dbReference>
<dbReference type="PANTHER" id="PTHR12534">
    <property type="entry name" value="30S RIBOSOMAL PROTEIN S2 PROKARYOTIC AND ORGANELLAR"/>
    <property type="match status" value="1"/>
</dbReference>
<dbReference type="PANTHER" id="PTHR12534:SF0">
    <property type="entry name" value="SMALL RIBOSOMAL SUBUNIT PROTEIN US2M"/>
    <property type="match status" value="1"/>
</dbReference>
<dbReference type="Pfam" id="PF00318">
    <property type="entry name" value="Ribosomal_S2"/>
    <property type="match status" value="1"/>
</dbReference>
<dbReference type="PRINTS" id="PR00395">
    <property type="entry name" value="RIBOSOMALS2"/>
</dbReference>
<dbReference type="SUPFAM" id="SSF52313">
    <property type="entry name" value="Ribosomal protein S2"/>
    <property type="match status" value="1"/>
</dbReference>
<dbReference type="PROSITE" id="PS00962">
    <property type="entry name" value="RIBOSOMAL_S2_1"/>
    <property type="match status" value="1"/>
</dbReference>
<evidence type="ECO:0000255" key="1">
    <source>
        <dbReference type="HAMAP-Rule" id="MF_00291"/>
    </source>
</evidence>
<evidence type="ECO:0000305" key="2"/>
<comment type="similarity">
    <text evidence="1">Belongs to the universal ribosomal protein uS2 family.</text>
</comment>